<proteinExistence type="evidence at protein level"/>
<feature type="signal peptide" evidence="3">
    <location>
        <begin position="1"/>
        <end position="23"/>
    </location>
</feature>
<feature type="chain" id="PRO_5007818315" description="Trimeric autotransporter adhesin- and peptidoglycan-associated protein A" evidence="1">
    <location>
        <begin position="24"/>
        <end position="264"/>
    </location>
</feature>
<feature type="domain" description="OmpA-like" evidence="2">
    <location>
        <begin position="142"/>
        <end position="264"/>
    </location>
</feature>
<dbReference type="EMBL" id="LC003235">
    <property type="protein sequence ID" value="BAU88430.1"/>
    <property type="molecule type" value="Genomic_DNA"/>
</dbReference>
<dbReference type="RefSeq" id="WP_009585404.1">
    <property type="nucleotide sequence ID" value="NZ_AP024708.1"/>
</dbReference>
<dbReference type="SMR" id="A0A160PB22"/>
<dbReference type="GO" id="GO:0009279">
    <property type="term" value="C:cell outer membrane"/>
    <property type="evidence" value="ECO:0007669"/>
    <property type="project" value="UniProtKB-SubCell"/>
</dbReference>
<dbReference type="GO" id="GO:0042597">
    <property type="term" value="C:periplasmic space"/>
    <property type="evidence" value="ECO:0007669"/>
    <property type="project" value="UniProtKB-SubCell"/>
</dbReference>
<dbReference type="CDD" id="cd07185">
    <property type="entry name" value="OmpA_C-like"/>
    <property type="match status" value="1"/>
</dbReference>
<dbReference type="Gene3D" id="3.30.1450.10">
    <property type="match status" value="1"/>
</dbReference>
<dbReference type="Gene3D" id="3.30.1330.60">
    <property type="entry name" value="OmpA-like domain"/>
    <property type="match status" value="1"/>
</dbReference>
<dbReference type="InterPro" id="IPR050330">
    <property type="entry name" value="Bact_OuterMem_StrucFunc"/>
</dbReference>
<dbReference type="InterPro" id="IPR037873">
    <property type="entry name" value="BamE-like"/>
</dbReference>
<dbReference type="InterPro" id="IPR007450">
    <property type="entry name" value="BamE_dom"/>
</dbReference>
<dbReference type="InterPro" id="IPR006664">
    <property type="entry name" value="OMP_bac"/>
</dbReference>
<dbReference type="InterPro" id="IPR006665">
    <property type="entry name" value="OmpA-like"/>
</dbReference>
<dbReference type="InterPro" id="IPR036737">
    <property type="entry name" value="OmpA-like_sf"/>
</dbReference>
<dbReference type="NCBIfam" id="NF047726">
    <property type="entry name" value="AutTranAdhPGAsTpgA"/>
    <property type="match status" value="1"/>
</dbReference>
<dbReference type="PANTHER" id="PTHR30329:SF21">
    <property type="entry name" value="LIPOPROTEIN YIAD-RELATED"/>
    <property type="match status" value="1"/>
</dbReference>
<dbReference type="PANTHER" id="PTHR30329">
    <property type="entry name" value="STATOR ELEMENT OF FLAGELLAR MOTOR COMPLEX"/>
    <property type="match status" value="1"/>
</dbReference>
<dbReference type="Pfam" id="PF04355">
    <property type="entry name" value="BamE"/>
    <property type="match status" value="1"/>
</dbReference>
<dbReference type="Pfam" id="PF00691">
    <property type="entry name" value="OmpA"/>
    <property type="match status" value="1"/>
</dbReference>
<dbReference type="PRINTS" id="PR01021">
    <property type="entry name" value="OMPADOMAIN"/>
</dbReference>
<dbReference type="SUPFAM" id="SSF103088">
    <property type="entry name" value="OmpA-like"/>
    <property type="match status" value="1"/>
</dbReference>
<dbReference type="PROSITE" id="PS51123">
    <property type="entry name" value="OMPA_2"/>
    <property type="match status" value="1"/>
</dbReference>
<keyword id="KW-0998">Cell outer membrane</keyword>
<keyword id="KW-0903">Direct protein sequencing</keyword>
<keyword id="KW-0472">Membrane</keyword>
<keyword id="KW-0574">Periplasm</keyword>
<keyword id="KW-0732">Signal</keyword>
<sequence>MKAFNKKIMFGVFSGLVMSLSHAAEVESANTQEIHFPEIKDSYLKQVNRYEYDDVARLDKGLTKDQIRHILGNPQFSEGLFAVKTWNYVLDIREPNSNQYKRCQLRIDFDKQYRSDNLYWKGEQCQGLMAWGINNQSETEQTTLAPGGQSASVLFYFDHADKNGVKNAEVIRKIADQIKQSDANSPVFVAGYTDRLGSFQYNQRLSAQRANTVVELLKQQGIRGEQIQYSAENKTDVYQKCAGINKKIQLVECLAPNRRVNITW</sequence>
<comment type="function">
    <text evidence="3">Required for proper surface expression of the autotransporter adhesin AtaA. Probably assists in the secretion of the passenger domain of AtaA from the periplasm to the extracellular environment across the cell outer membrane. Binds peptidoglycan.</text>
</comment>
<comment type="subunit">
    <text evidence="3">Monomer. Stably interacts with AtaA.</text>
</comment>
<comment type="subcellular location">
    <subcellularLocation>
        <location evidence="3">Cell outer membrane</location>
        <topology evidence="3">Peripheral membrane protein</topology>
        <orientation evidence="5">Periplasmic side</orientation>
    </subcellularLocation>
    <subcellularLocation>
        <location evidence="3">Periplasm</location>
    </subcellularLocation>
    <text evidence="3">Associates with the outer membrane in wild-type cells, if the ataA gene is deleted it is found in the periplasm.</text>
</comment>
<comment type="induction">
    <text evidence="3">Part of the ataA-tpgA operon.</text>
</comment>
<comment type="disruption phenotype">
    <text evidence="3">Decreases adhesiveness of cells to polystyrene. No change in the amount of AtaA associated with the cell outer membrane, but greatly reduced amounts of correctly targeted AtaA; significantly decreased AtaA immunofluorescence and nanofibers on the cell surface, and greatly increased amounts of AtaA passenger domain in the periplasm. No visible change in the amount of Omp38 in the outer membrane.</text>
</comment>
<evidence type="ECO:0000255" key="1"/>
<evidence type="ECO:0000255" key="2">
    <source>
        <dbReference type="PROSITE-ProRule" id="PRU00473"/>
    </source>
</evidence>
<evidence type="ECO:0000269" key="3">
    <source>
    </source>
</evidence>
<evidence type="ECO:0000303" key="4">
    <source>
    </source>
</evidence>
<evidence type="ECO:0000305" key="5"/>
<accession>A0A160PB22</accession>
<gene>
    <name evidence="4" type="primary">tpgA</name>
</gene>
<name>TPGA_ACIS5</name>
<protein>
    <recommendedName>
        <fullName evidence="4">Trimeric autotransporter adhesin- and peptidoglycan-associated protein A</fullName>
        <shortName evidence="4">TAA- and PGN-associated protein A</shortName>
        <shortName evidence="4">TpgA</shortName>
    </recommendedName>
</protein>
<reference key="1">
    <citation type="journal article" date="2016" name="Mol. Microbiol.">
        <title>Discovery of a novel periplasmic protein that forms a complex with a trimeric autotransporter adhesin and peptidoglycan.</title>
        <authorList>
            <person name="Ishikawa M."/>
            <person name="Yoshimoto S."/>
            <person name="Hayashi A."/>
            <person name="Kanie J."/>
            <person name="Hori K."/>
        </authorList>
    </citation>
    <scope>NUCLEOTIDE SEQUENCE [GENOMIC DNA]</scope>
    <scope>PROTEIN SEQUENCE OF N-TERMINUS</scope>
    <scope>PEPTIDOGLYCAN-BINDING</scope>
    <scope>INTERACTION WITH ATAA</scope>
    <scope>SUBUNIT</scope>
    <scope>OPERON</scope>
    <scope>DISRUPTION PHENOTYPE</scope>
    <source>
        <strain>Tol 5</strain>
    </source>
</reference>
<organism>
    <name type="scientific">Acinetobacter sp. (strain Tol 5)</name>
    <dbReference type="NCBI Taxonomy" id="710648"/>
    <lineage>
        <taxon>Bacteria</taxon>
        <taxon>Pseudomonadati</taxon>
        <taxon>Pseudomonadota</taxon>
        <taxon>Gammaproteobacteria</taxon>
        <taxon>Moraxellales</taxon>
        <taxon>Moraxellaceae</taxon>
        <taxon>Acinetobacter</taxon>
    </lineage>
</organism>